<evidence type="ECO:0000255" key="1">
    <source>
        <dbReference type="PROSITE-ProRule" id="PRU00176"/>
    </source>
</evidence>
<evidence type="ECO:0000255" key="2">
    <source>
        <dbReference type="PROSITE-ProRule" id="PRU01238"/>
    </source>
</evidence>
<evidence type="ECO:0000256" key="3">
    <source>
        <dbReference type="SAM" id="MobiDB-lite"/>
    </source>
</evidence>
<evidence type="ECO:0000269" key="4">
    <source>
    </source>
</evidence>
<evidence type="ECO:0000269" key="5">
    <source>
    </source>
</evidence>
<evidence type="ECO:0000269" key="6">
    <source>
    </source>
</evidence>
<evidence type="ECO:0000269" key="7">
    <source>
    </source>
</evidence>
<evidence type="ECO:0000269" key="8">
    <source>
    </source>
</evidence>
<evidence type="ECO:0000303" key="9">
    <source>
    </source>
</evidence>
<evidence type="ECO:0000305" key="10"/>
<name>BOULE_DROME</name>
<proteinExistence type="evidence at protein level"/>
<reference key="1">
    <citation type="journal article" date="1996" name="Nature">
        <title>Meiotic cell cycle requirement for a fly homologue of human Deleted in Azoospermia.</title>
        <authorList>
            <person name="Eberhart C.G."/>
            <person name="Maines J.Z."/>
            <person name="Wasserman S.A."/>
        </authorList>
    </citation>
    <scope>NUCLEOTIDE SEQUENCE [MRNA] (ISOFORM 1)</scope>
    <scope>FUNCTION</scope>
    <scope>TISSUE SPECIFICITY</scope>
    <scope>DEVELOPMENTAL STAGE</scope>
</reference>
<reference key="2">
    <citation type="journal article" date="2000" name="Science">
        <title>The genome sequence of Drosophila melanogaster.</title>
        <authorList>
            <person name="Adams M.D."/>
            <person name="Celniker S.E."/>
            <person name="Holt R.A."/>
            <person name="Evans C.A."/>
            <person name="Gocayne J.D."/>
            <person name="Amanatides P.G."/>
            <person name="Scherer S.E."/>
            <person name="Li P.W."/>
            <person name="Hoskins R.A."/>
            <person name="Galle R.F."/>
            <person name="George R.A."/>
            <person name="Lewis S.E."/>
            <person name="Richards S."/>
            <person name="Ashburner M."/>
            <person name="Henderson S.N."/>
            <person name="Sutton G.G."/>
            <person name="Wortman J.R."/>
            <person name="Yandell M.D."/>
            <person name="Zhang Q."/>
            <person name="Chen L.X."/>
            <person name="Brandon R.C."/>
            <person name="Rogers Y.-H.C."/>
            <person name="Blazej R.G."/>
            <person name="Champe M."/>
            <person name="Pfeiffer B.D."/>
            <person name="Wan K.H."/>
            <person name="Doyle C."/>
            <person name="Baxter E.G."/>
            <person name="Helt G."/>
            <person name="Nelson C.R."/>
            <person name="Miklos G.L.G."/>
            <person name="Abril J.F."/>
            <person name="Agbayani A."/>
            <person name="An H.-J."/>
            <person name="Andrews-Pfannkoch C."/>
            <person name="Baldwin D."/>
            <person name="Ballew R.M."/>
            <person name="Basu A."/>
            <person name="Baxendale J."/>
            <person name="Bayraktaroglu L."/>
            <person name="Beasley E.M."/>
            <person name="Beeson K.Y."/>
            <person name="Benos P.V."/>
            <person name="Berman B.P."/>
            <person name="Bhandari D."/>
            <person name="Bolshakov S."/>
            <person name="Borkova D."/>
            <person name="Botchan M.R."/>
            <person name="Bouck J."/>
            <person name="Brokstein P."/>
            <person name="Brottier P."/>
            <person name="Burtis K.C."/>
            <person name="Busam D.A."/>
            <person name="Butler H."/>
            <person name="Cadieu E."/>
            <person name="Center A."/>
            <person name="Chandra I."/>
            <person name="Cherry J.M."/>
            <person name="Cawley S."/>
            <person name="Dahlke C."/>
            <person name="Davenport L.B."/>
            <person name="Davies P."/>
            <person name="de Pablos B."/>
            <person name="Delcher A."/>
            <person name="Deng Z."/>
            <person name="Mays A.D."/>
            <person name="Dew I."/>
            <person name="Dietz S.M."/>
            <person name="Dodson K."/>
            <person name="Doup L.E."/>
            <person name="Downes M."/>
            <person name="Dugan-Rocha S."/>
            <person name="Dunkov B.C."/>
            <person name="Dunn P."/>
            <person name="Durbin K.J."/>
            <person name="Evangelista C.C."/>
            <person name="Ferraz C."/>
            <person name="Ferriera S."/>
            <person name="Fleischmann W."/>
            <person name="Fosler C."/>
            <person name="Gabrielian A.E."/>
            <person name="Garg N.S."/>
            <person name="Gelbart W.M."/>
            <person name="Glasser K."/>
            <person name="Glodek A."/>
            <person name="Gong F."/>
            <person name="Gorrell J.H."/>
            <person name="Gu Z."/>
            <person name="Guan P."/>
            <person name="Harris M."/>
            <person name="Harris N.L."/>
            <person name="Harvey D.A."/>
            <person name="Heiman T.J."/>
            <person name="Hernandez J.R."/>
            <person name="Houck J."/>
            <person name="Hostin D."/>
            <person name="Houston K.A."/>
            <person name="Howland T.J."/>
            <person name="Wei M.-H."/>
            <person name="Ibegwam C."/>
            <person name="Jalali M."/>
            <person name="Kalush F."/>
            <person name="Karpen G.H."/>
            <person name="Ke Z."/>
            <person name="Kennison J.A."/>
            <person name="Ketchum K.A."/>
            <person name="Kimmel B.E."/>
            <person name="Kodira C.D."/>
            <person name="Kraft C.L."/>
            <person name="Kravitz S."/>
            <person name="Kulp D."/>
            <person name="Lai Z."/>
            <person name="Lasko P."/>
            <person name="Lei Y."/>
            <person name="Levitsky A.A."/>
            <person name="Li J.H."/>
            <person name="Li Z."/>
            <person name="Liang Y."/>
            <person name="Lin X."/>
            <person name="Liu X."/>
            <person name="Mattei B."/>
            <person name="McIntosh T.C."/>
            <person name="McLeod M.P."/>
            <person name="McPherson D."/>
            <person name="Merkulov G."/>
            <person name="Milshina N.V."/>
            <person name="Mobarry C."/>
            <person name="Morris J."/>
            <person name="Moshrefi A."/>
            <person name="Mount S.M."/>
            <person name="Moy M."/>
            <person name="Murphy B."/>
            <person name="Murphy L."/>
            <person name="Muzny D.M."/>
            <person name="Nelson D.L."/>
            <person name="Nelson D.R."/>
            <person name="Nelson K.A."/>
            <person name="Nixon K."/>
            <person name="Nusskern D.R."/>
            <person name="Pacleb J.M."/>
            <person name="Palazzolo M."/>
            <person name="Pittman G.S."/>
            <person name="Pan S."/>
            <person name="Pollard J."/>
            <person name="Puri V."/>
            <person name="Reese M.G."/>
            <person name="Reinert K."/>
            <person name="Remington K."/>
            <person name="Saunders R.D.C."/>
            <person name="Scheeler F."/>
            <person name="Shen H."/>
            <person name="Shue B.C."/>
            <person name="Siden-Kiamos I."/>
            <person name="Simpson M."/>
            <person name="Skupski M.P."/>
            <person name="Smith T.J."/>
            <person name="Spier E."/>
            <person name="Spradling A.C."/>
            <person name="Stapleton M."/>
            <person name="Strong R."/>
            <person name="Sun E."/>
            <person name="Svirskas R."/>
            <person name="Tector C."/>
            <person name="Turner R."/>
            <person name="Venter E."/>
            <person name="Wang A.H."/>
            <person name="Wang X."/>
            <person name="Wang Z.-Y."/>
            <person name="Wassarman D.A."/>
            <person name="Weinstock G.M."/>
            <person name="Weissenbach J."/>
            <person name="Williams S.M."/>
            <person name="Woodage T."/>
            <person name="Worley K.C."/>
            <person name="Wu D."/>
            <person name="Yang S."/>
            <person name="Yao Q.A."/>
            <person name="Ye J."/>
            <person name="Yeh R.-F."/>
            <person name="Zaveri J.S."/>
            <person name="Zhan M."/>
            <person name="Zhang G."/>
            <person name="Zhao Q."/>
            <person name="Zheng L."/>
            <person name="Zheng X.H."/>
            <person name="Zhong F.N."/>
            <person name="Zhong W."/>
            <person name="Zhou X."/>
            <person name="Zhu S.C."/>
            <person name="Zhu X."/>
            <person name="Smith H.O."/>
            <person name="Gibbs R.A."/>
            <person name="Myers E.W."/>
            <person name="Rubin G.M."/>
            <person name="Venter J.C."/>
        </authorList>
    </citation>
    <scope>NUCLEOTIDE SEQUENCE [LARGE SCALE GENOMIC DNA]</scope>
    <source>
        <strain>Berkeley</strain>
    </source>
</reference>
<reference key="3">
    <citation type="journal article" date="2002" name="Genome Biol.">
        <title>Annotation of the Drosophila melanogaster euchromatic genome: a systematic review.</title>
        <authorList>
            <person name="Misra S."/>
            <person name="Crosby M.A."/>
            <person name="Mungall C.J."/>
            <person name="Matthews B.B."/>
            <person name="Campbell K.S."/>
            <person name="Hradecky P."/>
            <person name="Huang Y."/>
            <person name="Kaminker J.S."/>
            <person name="Millburn G.H."/>
            <person name="Prochnik S.E."/>
            <person name="Smith C.D."/>
            <person name="Tupy J.L."/>
            <person name="Whitfield E.J."/>
            <person name="Bayraktaroglu L."/>
            <person name="Berman B.P."/>
            <person name="Bettencourt B.R."/>
            <person name="Celniker S.E."/>
            <person name="de Grey A.D.N.J."/>
            <person name="Drysdale R.A."/>
            <person name="Harris N.L."/>
            <person name="Richter J."/>
            <person name="Russo S."/>
            <person name="Schroeder A.J."/>
            <person name="Shu S.Q."/>
            <person name="Stapleton M."/>
            <person name="Yamada C."/>
            <person name="Ashburner M."/>
            <person name="Gelbart W.M."/>
            <person name="Rubin G.M."/>
            <person name="Lewis S.E."/>
        </authorList>
    </citation>
    <scope>GENOME REANNOTATION</scope>
    <scope>ALTERNATIVE SPLICING</scope>
    <source>
        <strain>Berkeley</strain>
    </source>
</reference>
<reference key="4">
    <citation type="journal article" date="2002" name="Genome Biol.">
        <title>A Drosophila full-length cDNA resource.</title>
        <authorList>
            <person name="Stapleton M."/>
            <person name="Carlson J.W."/>
            <person name="Brokstein P."/>
            <person name="Yu C."/>
            <person name="Champe M."/>
            <person name="George R.A."/>
            <person name="Guarin H."/>
            <person name="Kronmiller B."/>
            <person name="Pacleb J.M."/>
            <person name="Park S."/>
            <person name="Wan K.H."/>
            <person name="Rubin G.M."/>
            <person name="Celniker S.E."/>
        </authorList>
    </citation>
    <scope>NUCLEOTIDE SEQUENCE [LARGE SCALE MRNA] OF 43-228 (ISOFORM 1)</scope>
    <scope>NUCLEOTIDE SEQUENCE [LARGE SCALE MRNA] OF 167-228 (ISOFORM 2)</scope>
    <source>
        <strain>Berkeley</strain>
        <tissue>Testis</tissue>
    </source>
</reference>
<reference key="5">
    <citation type="journal article" date="1998" name="Dev. Biol.">
        <title>Biphasic subcellular localization of the DAZL-related protein boule in Drosophila spermatogenesis.</title>
        <authorList>
            <person name="Cheng M.H."/>
            <person name="Maines J.Z."/>
            <person name="Wasserman S.A."/>
        </authorList>
    </citation>
    <scope>SUBCELLULAR LOCATION</scope>
</reference>
<reference key="6">
    <citation type="journal article" date="1999" name="Nat. Cell Biol.">
        <title>Post-transcriptional regulation of the meiotic Cdc25 protein Twine by the Dazl orthologue Boule.</title>
        <authorList>
            <person name="Maines J.Z."/>
            <person name="Wasserman S.A."/>
        </authorList>
    </citation>
    <scope>FUNCTION</scope>
</reference>
<reference key="7">
    <citation type="journal article" date="2003" name="Hum. Mol. Genet.">
        <title>Human BOULE gene rescues meiotic defects in infertile flies.</title>
        <authorList>
            <person name="Xu E.Y."/>
            <person name="Lee D.F."/>
            <person name="Klebes A."/>
            <person name="Turek P.J."/>
            <person name="Kornberg T.B."/>
            <person name="Reijo Pera R.A."/>
        </authorList>
    </citation>
    <scope>FUNCTION</scope>
</reference>
<reference key="8">
    <citation type="journal article" date="2012" name="PLoS Genet.">
        <title>The CPEB protein Orb2 has multiple functions during spermatogenesis in Drosophila melanogaster.</title>
        <authorList>
            <person name="Xu S."/>
            <person name="Hafer N."/>
            <person name="Agunwamba B."/>
            <person name="Schedl P."/>
        </authorList>
    </citation>
    <scope>INTERACTION WITH ORB2</scope>
</reference>
<comment type="function">
    <text evidence="4 5 7">RNA-binding protein that plays a central role in spermatogenesis. Required for meiotic entry and germline differentiation, at the transition between G2 and M phases of meiosis I. Acts by regulating translation of specific mRNAs, possibly by binding to their 3'-UTR. Essential for translation of twine (twe) mRNA. Required for the expression of various genes such as CG6784, CG17210, CG15841 scpr-B, scpr-C, and rho-6.</text>
</comment>
<comment type="subunit">
    <text evidence="6">Interacts with the translational regulator orb2.</text>
</comment>
<comment type="subcellular location">
    <subcellularLocation>
        <location evidence="8">Nucleus</location>
    </subcellularLocation>
    <subcellularLocation>
        <location evidence="8">Cytoplasm</location>
    </subcellularLocation>
    <text>Nuclear in primary spermatocytes until near the end of the meiotic prophase and cytoplasmic localization from then onward.</text>
</comment>
<comment type="alternative products">
    <event type="alternative splicing"/>
    <isoform>
        <id>Q24207-1</id>
        <name>1</name>
        <sequence type="displayed"/>
    </isoform>
    <isoform>
        <id>Q24207-2</id>
        <name>2</name>
        <sequence type="described" ref="VSP_009450 VSP_009451"/>
    </isoform>
</comment>
<comment type="tissue specificity">
    <text evidence="7">Testis specific.</text>
</comment>
<comment type="developmental stage">
    <text evidence="7">Not expressed in embryos. Expressed in larvae, pupae and adult males. Expressed during spermatogenesis.</text>
</comment>
<comment type="similarity">
    <text evidence="2">Belongs to the RRM DAZ family.</text>
</comment>
<comment type="sequence caution" evidence="10">
    <conflict type="erroneous translation">
        <sequence resource="EMBL-CDS" id="AAL90061"/>
    </conflict>
    <text>Wrong choice of frame.</text>
</comment>
<organism>
    <name type="scientific">Drosophila melanogaster</name>
    <name type="common">Fruit fly</name>
    <dbReference type="NCBI Taxonomy" id="7227"/>
    <lineage>
        <taxon>Eukaryota</taxon>
        <taxon>Metazoa</taxon>
        <taxon>Ecdysozoa</taxon>
        <taxon>Arthropoda</taxon>
        <taxon>Hexapoda</taxon>
        <taxon>Insecta</taxon>
        <taxon>Pterygota</taxon>
        <taxon>Neoptera</taxon>
        <taxon>Endopterygota</taxon>
        <taxon>Diptera</taxon>
        <taxon>Brachycera</taxon>
        <taxon>Muscomorpha</taxon>
        <taxon>Ephydroidea</taxon>
        <taxon>Drosophilidae</taxon>
        <taxon>Drosophila</taxon>
        <taxon>Sophophora</taxon>
    </lineage>
</organism>
<gene>
    <name type="primary">bol</name>
    <name type="ORF">CG4760</name>
</gene>
<dbReference type="EMBL" id="U51858">
    <property type="protein sequence ID" value="AAC47133.1"/>
    <property type="molecule type" value="mRNA"/>
</dbReference>
<dbReference type="EMBL" id="AE014296">
    <property type="protein sequence ID" value="AAF50316.3"/>
    <property type="molecule type" value="Genomic_DNA"/>
</dbReference>
<dbReference type="EMBL" id="AE014296">
    <property type="protein sequence ID" value="AAF50317.3"/>
    <property type="molecule type" value="Genomic_DNA"/>
</dbReference>
<dbReference type="EMBL" id="AI063811">
    <property type="status" value="NOT_ANNOTATED_CDS"/>
    <property type="molecule type" value="mRNA"/>
</dbReference>
<dbReference type="EMBL" id="AY089323">
    <property type="protein sequence ID" value="AAL90061.1"/>
    <property type="status" value="ALT_SEQ"/>
    <property type="molecule type" value="mRNA"/>
</dbReference>
<dbReference type="PIR" id="S68988">
    <property type="entry name" value="S68988"/>
</dbReference>
<dbReference type="RefSeq" id="NP_001286992.1">
    <molecule id="Q24207-1"/>
    <property type="nucleotide sequence ID" value="NM_001300063.1"/>
</dbReference>
<dbReference type="RefSeq" id="NP_523989.1">
    <molecule id="Q24207-1"/>
    <property type="nucleotide sequence ID" value="NM_079265.4"/>
</dbReference>
<dbReference type="RefSeq" id="NP_729456.1">
    <molecule id="Q24207-1"/>
    <property type="nucleotide sequence ID" value="NM_168318.3"/>
</dbReference>
<dbReference type="RefSeq" id="NP_729457.1">
    <property type="nucleotide sequence ID" value="NM_168319.2"/>
</dbReference>
<dbReference type="RefSeq" id="NP_729458.1">
    <property type="nucleotide sequence ID" value="NM_168320.2"/>
</dbReference>
<dbReference type="SMR" id="Q24207"/>
<dbReference type="BioGRID" id="64449">
    <property type="interactions" value="13"/>
</dbReference>
<dbReference type="DIP" id="DIP-20744N"/>
<dbReference type="FunCoup" id="Q24207">
    <property type="interactions" value="191"/>
</dbReference>
<dbReference type="IntAct" id="Q24207">
    <property type="interactions" value="5"/>
</dbReference>
<dbReference type="STRING" id="7227.FBpp0304242"/>
<dbReference type="GlyGen" id="Q24207">
    <property type="glycosylation" value="1 site"/>
</dbReference>
<dbReference type="PaxDb" id="7227-FBpp0304242"/>
<dbReference type="DNASU" id="39049"/>
<dbReference type="EnsemblMetazoa" id="FBtr0076538">
    <molecule id="Q24207-1"/>
    <property type="protein sequence ID" value="FBpp0076265"/>
    <property type="gene ID" value="FBgn0011206"/>
</dbReference>
<dbReference type="EnsemblMetazoa" id="FBtr0076540">
    <molecule id="Q24207-1"/>
    <property type="protein sequence ID" value="FBpp0076267"/>
    <property type="gene ID" value="FBgn0011206"/>
</dbReference>
<dbReference type="EnsemblMetazoa" id="FBtr0344979">
    <molecule id="Q24207-1"/>
    <property type="protein sequence ID" value="FBpp0311234"/>
    <property type="gene ID" value="FBgn0011206"/>
</dbReference>
<dbReference type="GeneID" id="39049"/>
<dbReference type="KEGG" id="dme:Dmel_CG4760"/>
<dbReference type="UCSC" id="CG4760-RA">
    <molecule id="Q24207-1"/>
    <property type="organism name" value="d. melanogaster"/>
</dbReference>
<dbReference type="AGR" id="FB:FBgn0011206"/>
<dbReference type="CTD" id="39049"/>
<dbReference type="FlyBase" id="FBgn0011206">
    <property type="gene designation" value="bol"/>
</dbReference>
<dbReference type="VEuPathDB" id="VectorBase:FBgn0011206"/>
<dbReference type="eggNOG" id="KOG0118">
    <property type="taxonomic scope" value="Eukaryota"/>
</dbReference>
<dbReference type="GeneTree" id="ENSGT00530000063480"/>
<dbReference type="InParanoid" id="Q24207"/>
<dbReference type="OrthoDB" id="762982at2759"/>
<dbReference type="PhylomeDB" id="Q24207"/>
<dbReference type="BioGRID-ORCS" id="39049">
    <property type="hits" value="0 hits in 3 CRISPR screens"/>
</dbReference>
<dbReference type="ChiTaRS" id="bol">
    <property type="organism name" value="fly"/>
</dbReference>
<dbReference type="GenomeRNAi" id="39049"/>
<dbReference type="PRO" id="PR:Q24207"/>
<dbReference type="Proteomes" id="UP000000803">
    <property type="component" value="Chromosome 3L"/>
</dbReference>
<dbReference type="Bgee" id="FBgn0011206">
    <property type="expression patterns" value="Expressed in medullary intrinsic neuron Mi4 (Drosophila) in insect head and 281 other cell types or tissues"/>
</dbReference>
<dbReference type="ExpressionAtlas" id="Q24207">
    <property type="expression patterns" value="baseline and differential"/>
</dbReference>
<dbReference type="GO" id="GO:0005737">
    <property type="term" value="C:cytoplasm"/>
    <property type="evidence" value="ECO:0000314"/>
    <property type="project" value="UniProtKB"/>
</dbReference>
<dbReference type="GO" id="GO:0005634">
    <property type="term" value="C:nucleus"/>
    <property type="evidence" value="ECO:0000314"/>
    <property type="project" value="UniProtKB"/>
</dbReference>
<dbReference type="GO" id="GO:0043204">
    <property type="term" value="C:perikaryon"/>
    <property type="evidence" value="ECO:0000314"/>
    <property type="project" value="FlyBase"/>
</dbReference>
<dbReference type="GO" id="GO:0003730">
    <property type="term" value="F:mRNA 3'-UTR binding"/>
    <property type="evidence" value="ECO:0000318"/>
    <property type="project" value="GO_Central"/>
</dbReference>
<dbReference type="GO" id="GO:0003729">
    <property type="term" value="F:mRNA binding"/>
    <property type="evidence" value="ECO:0000250"/>
    <property type="project" value="FlyBase"/>
</dbReference>
<dbReference type="GO" id="GO:0003723">
    <property type="term" value="F:RNA binding"/>
    <property type="evidence" value="ECO:0000315"/>
    <property type="project" value="UniProtKB"/>
</dbReference>
<dbReference type="GO" id="GO:0008494">
    <property type="term" value="F:translation activator activity"/>
    <property type="evidence" value="ECO:0000318"/>
    <property type="project" value="GO_Central"/>
</dbReference>
<dbReference type="GO" id="GO:0070935">
    <property type="term" value="P:3'-UTR-mediated mRNA stabilization"/>
    <property type="evidence" value="ECO:0000318"/>
    <property type="project" value="GO_Central"/>
</dbReference>
<dbReference type="GO" id="GO:0030154">
    <property type="term" value="P:cell differentiation"/>
    <property type="evidence" value="ECO:0007669"/>
    <property type="project" value="UniProtKB-KW"/>
</dbReference>
<dbReference type="GO" id="GO:0008315">
    <property type="term" value="P:G2/MI transition of meiotic cell cycle"/>
    <property type="evidence" value="ECO:0000315"/>
    <property type="project" value="UniProtKB"/>
</dbReference>
<dbReference type="GO" id="GO:0045948">
    <property type="term" value="P:positive regulation of translational initiation"/>
    <property type="evidence" value="ECO:0000318"/>
    <property type="project" value="GO_Central"/>
</dbReference>
<dbReference type="GO" id="GO:0045924">
    <property type="term" value="P:regulation of female receptivity"/>
    <property type="evidence" value="ECO:0000315"/>
    <property type="project" value="UniProtKB"/>
</dbReference>
<dbReference type="GO" id="GO:0006417">
    <property type="term" value="P:regulation of translation"/>
    <property type="evidence" value="ECO:0000316"/>
    <property type="project" value="FlyBase"/>
</dbReference>
<dbReference type="GO" id="GO:0048137">
    <property type="term" value="P:spermatocyte division"/>
    <property type="evidence" value="ECO:0000315"/>
    <property type="project" value="UniProtKB"/>
</dbReference>
<dbReference type="CDD" id="cd12412">
    <property type="entry name" value="RRM_DAZL_BOULE"/>
    <property type="match status" value="1"/>
</dbReference>
<dbReference type="FunFam" id="3.30.70.330:FF:000167">
    <property type="entry name" value="protein boule-like isoform X1"/>
    <property type="match status" value="1"/>
</dbReference>
<dbReference type="Gene3D" id="3.30.70.330">
    <property type="match status" value="1"/>
</dbReference>
<dbReference type="InterPro" id="IPR034988">
    <property type="entry name" value="DAZ_BOULE_RRM"/>
</dbReference>
<dbReference type="InterPro" id="IPR043628">
    <property type="entry name" value="DAZ_dom"/>
</dbReference>
<dbReference type="InterPro" id="IPR012677">
    <property type="entry name" value="Nucleotide-bd_a/b_plait_sf"/>
</dbReference>
<dbReference type="InterPro" id="IPR035979">
    <property type="entry name" value="RBD_domain_sf"/>
</dbReference>
<dbReference type="InterPro" id="IPR000504">
    <property type="entry name" value="RRM_dom"/>
</dbReference>
<dbReference type="PANTHER" id="PTHR11176">
    <property type="entry name" value="BOULE-RELATED"/>
    <property type="match status" value="1"/>
</dbReference>
<dbReference type="PANTHER" id="PTHR11176:SF57">
    <property type="entry name" value="PROTEIN BOULE"/>
    <property type="match status" value="1"/>
</dbReference>
<dbReference type="Pfam" id="PF00076">
    <property type="entry name" value="RRM_1"/>
    <property type="match status" value="1"/>
</dbReference>
<dbReference type="SMART" id="SM00360">
    <property type="entry name" value="RRM"/>
    <property type="match status" value="1"/>
</dbReference>
<dbReference type="SUPFAM" id="SSF54928">
    <property type="entry name" value="RNA-binding domain, RBD"/>
    <property type="match status" value="1"/>
</dbReference>
<dbReference type="PROSITE" id="PS51890">
    <property type="entry name" value="DAZ"/>
    <property type="match status" value="1"/>
</dbReference>
<dbReference type="PROSITE" id="PS50102">
    <property type="entry name" value="RRM"/>
    <property type="match status" value="1"/>
</dbReference>
<protein>
    <recommendedName>
        <fullName>Protein boule</fullName>
    </recommendedName>
</protein>
<accession>Q24207</accession>
<accession>Q8T472</accession>
<accession>Q9VSU4</accession>
<accession>Q9VSU5</accession>
<feature type="chain" id="PRO_0000081497" description="Protein boule">
    <location>
        <begin position="1"/>
        <end position="228"/>
    </location>
</feature>
<feature type="domain" description="RRM" evidence="1">
    <location>
        <begin position="33"/>
        <end position="110"/>
    </location>
</feature>
<feature type="domain" description="DAZ" evidence="2">
    <location>
        <begin position="151"/>
        <end position="178"/>
    </location>
</feature>
<feature type="region of interest" description="Disordered" evidence="3">
    <location>
        <begin position="193"/>
        <end position="228"/>
    </location>
</feature>
<feature type="compositionally biased region" description="Low complexity" evidence="3">
    <location>
        <begin position="193"/>
        <end position="214"/>
    </location>
</feature>
<feature type="compositionally biased region" description="Basic and acidic residues" evidence="3">
    <location>
        <begin position="219"/>
        <end position="228"/>
    </location>
</feature>
<feature type="splice variant" id="VSP_009450" description="In isoform 2." evidence="9">
    <original>E</original>
    <variation>G</variation>
    <location>
        <position position="189"/>
    </location>
</feature>
<feature type="splice variant" id="VSP_009451" description="In isoform 2." evidence="9">
    <location>
        <position position="190"/>
    </location>
</feature>
<sequence length="228" mass="24682">MHKIAAAPPPSATPGGGLETPLAAPKYGTLIPNRIFVGGISGDTTEADLTRVFSAYGTVKSTKIIVDRAGVSKGYGFVTFETEQEAQRLQADGECVVLRDRKLNIAPAIKKQPNPLQSIVATNGAVYYTTTPPAPISNIPMDQFAAAVYPPAAGVPAIYPPSAMQYQPFYQYYSVPMNVPTIWPQNYQENHSPLLHSPTSNPHSPHSQSHPQSPCWSIEDLRDTLPRV</sequence>
<keyword id="KW-0010">Activator</keyword>
<keyword id="KW-0025">Alternative splicing</keyword>
<keyword id="KW-0963">Cytoplasm</keyword>
<keyword id="KW-0217">Developmental protein</keyword>
<keyword id="KW-0221">Differentiation</keyword>
<keyword id="KW-0539">Nucleus</keyword>
<keyword id="KW-1185">Reference proteome</keyword>
<keyword id="KW-0694">RNA-binding</keyword>
<keyword id="KW-0744">Spermatogenesis</keyword>
<keyword id="KW-0810">Translation regulation</keyword>